<keyword id="KW-0378">Hydrolase</keyword>
<keyword id="KW-0479">Metal-binding</keyword>
<keyword id="KW-1185">Reference proteome</keyword>
<keyword id="KW-0862">Zinc</keyword>
<reference key="1">
    <citation type="journal article" date="2010" name="Stand. Genomic Sci.">
        <title>Complete genome sequence of Nocardiopsis dassonvillei type strain (IMRU 509).</title>
        <authorList>
            <consortium name="US DOE Joint Genome Institute (JGI-PGF)"/>
            <person name="Sun H."/>
            <person name="Lapidus A."/>
            <person name="Nolan M."/>
            <person name="Lucas S."/>
            <person name="Del Rio T.G."/>
            <person name="Tice H."/>
            <person name="Cheng J.F."/>
            <person name="Tapia R."/>
            <person name="Han C."/>
            <person name="Goodwin L."/>
            <person name="Pitluck S."/>
            <person name="Pagani I."/>
            <person name="Ivanova N."/>
            <person name="Mavromatis K."/>
            <person name="Mikhailova N."/>
            <person name="Pati A."/>
            <person name="Chen A."/>
            <person name="Palaniappan K."/>
            <person name="Land M."/>
            <person name="Hauser L."/>
            <person name="Chang Y.J."/>
            <person name="Jeffries C.D."/>
            <person name="Djao O.D."/>
            <person name="Rohde M."/>
            <person name="Sikorski J."/>
            <person name="Goker M."/>
            <person name="Woyke T."/>
            <person name="Bristow J."/>
            <person name="Eisen J.A."/>
            <person name="Markowitz V."/>
            <person name="Hugenholtz P."/>
            <person name="Kyrpides N.C."/>
            <person name="Klenk H.P."/>
        </authorList>
    </citation>
    <scope>NUCLEOTIDE SEQUENCE [LARGE SCALE GENOMIC DNA]</scope>
    <source>
        <strain>ATCC 23218 / DSM 43111 / CIP 107115 / JCM 7437 / KCTC 9190 / NBRC 14626 / NCTC 10488 / NRRL B-5397 / IMRU 509</strain>
    </source>
</reference>
<comment type="function">
    <text evidence="1">Catalyzes the deacetylation of 1D-myo-inositol 2-acetamido-2-deoxy-alpha-D-glucopyranoside (GlcNAc-Ins) in the mycothiol biosynthesis pathway.</text>
</comment>
<comment type="catalytic activity">
    <reaction evidence="1">
        <text>1D-myo-inositol 2-acetamido-2-deoxy-alpha-D-glucopyranoside + H2O = 1D-myo-inositol 2-amino-2-deoxy-alpha-D-glucopyranoside + acetate</text>
        <dbReference type="Rhea" id="RHEA:26180"/>
        <dbReference type="ChEBI" id="CHEBI:15377"/>
        <dbReference type="ChEBI" id="CHEBI:30089"/>
        <dbReference type="ChEBI" id="CHEBI:52442"/>
        <dbReference type="ChEBI" id="CHEBI:58886"/>
        <dbReference type="EC" id="3.5.1.103"/>
    </reaction>
</comment>
<comment type="cofactor">
    <cofactor evidence="1">
        <name>Zn(2+)</name>
        <dbReference type="ChEBI" id="CHEBI:29105"/>
    </cofactor>
    <text evidence="1">Binds 1 zinc ion per subunit.</text>
</comment>
<comment type="similarity">
    <text evidence="1">Belongs to the MshB deacetylase family.</text>
</comment>
<dbReference type="EC" id="3.5.1.103" evidence="1"/>
<dbReference type="EMBL" id="CP002040">
    <property type="protein sequence ID" value="ADH69305.1"/>
    <property type="molecule type" value="Genomic_DNA"/>
</dbReference>
<dbReference type="SMR" id="D7B6L8"/>
<dbReference type="STRING" id="446468.Ndas_3908"/>
<dbReference type="KEGG" id="nda:Ndas_3908"/>
<dbReference type="eggNOG" id="COG2120">
    <property type="taxonomic scope" value="Bacteria"/>
</dbReference>
<dbReference type="HOGENOM" id="CLU_049311_2_1_11"/>
<dbReference type="OrthoDB" id="158614at2"/>
<dbReference type="Proteomes" id="UP000002219">
    <property type="component" value="Chromosome 1"/>
</dbReference>
<dbReference type="GO" id="GO:0035595">
    <property type="term" value="F:N-acetylglucosaminylinositol deacetylase activity"/>
    <property type="evidence" value="ECO:0007669"/>
    <property type="project" value="UniProtKB-EC"/>
</dbReference>
<dbReference type="GO" id="GO:0008270">
    <property type="term" value="F:zinc ion binding"/>
    <property type="evidence" value="ECO:0007669"/>
    <property type="project" value="UniProtKB-UniRule"/>
</dbReference>
<dbReference type="GO" id="GO:0010125">
    <property type="term" value="P:mycothiol biosynthetic process"/>
    <property type="evidence" value="ECO:0007669"/>
    <property type="project" value="UniProtKB-UniRule"/>
</dbReference>
<dbReference type="Gene3D" id="3.40.50.10320">
    <property type="entry name" value="LmbE-like"/>
    <property type="match status" value="1"/>
</dbReference>
<dbReference type="HAMAP" id="MF_01696">
    <property type="entry name" value="MshB"/>
    <property type="match status" value="1"/>
</dbReference>
<dbReference type="InterPro" id="IPR003737">
    <property type="entry name" value="GlcNAc_PI_deacetylase-related"/>
</dbReference>
<dbReference type="InterPro" id="IPR024078">
    <property type="entry name" value="LmbE-like_dom_sf"/>
</dbReference>
<dbReference type="InterPro" id="IPR017810">
    <property type="entry name" value="Mycothiol_biosynthesis_MshB"/>
</dbReference>
<dbReference type="NCBIfam" id="TIGR03445">
    <property type="entry name" value="mycothiol_MshB"/>
    <property type="match status" value="1"/>
</dbReference>
<dbReference type="PANTHER" id="PTHR12993:SF26">
    <property type="entry name" value="1D-MYO-INOSITOL 2-ACETAMIDO-2-DEOXY-ALPHA-D-GLUCOPYRANOSIDE DEACETYLASE"/>
    <property type="match status" value="1"/>
</dbReference>
<dbReference type="PANTHER" id="PTHR12993">
    <property type="entry name" value="N-ACETYLGLUCOSAMINYL-PHOSPHATIDYLINOSITOL DE-N-ACETYLASE-RELATED"/>
    <property type="match status" value="1"/>
</dbReference>
<dbReference type="Pfam" id="PF02585">
    <property type="entry name" value="PIG-L"/>
    <property type="match status" value="1"/>
</dbReference>
<dbReference type="SUPFAM" id="SSF102588">
    <property type="entry name" value="LmbE-like"/>
    <property type="match status" value="1"/>
</dbReference>
<gene>
    <name evidence="1" type="primary">mshB</name>
    <name type="ordered locus">Ndas_3908</name>
</gene>
<proteinExistence type="inferred from homology"/>
<organism>
    <name type="scientific">Nocardiopsis dassonvillei (strain ATCC 23218 / DSM 43111 / CIP 107115 / JCM 7437 / KCTC 9190 / NBRC 14626 / NCTC 10488 / NRRL B-5397 / IMRU 509)</name>
    <name type="common">Actinomadura dassonvillei</name>
    <dbReference type="NCBI Taxonomy" id="446468"/>
    <lineage>
        <taxon>Bacteria</taxon>
        <taxon>Bacillati</taxon>
        <taxon>Actinomycetota</taxon>
        <taxon>Actinomycetes</taxon>
        <taxon>Streptosporangiales</taxon>
        <taxon>Nocardiopsidaceae</taxon>
        <taxon>Nocardiopsis</taxon>
    </lineage>
</organism>
<accession>D7B6L8</accession>
<sequence length="282" mass="30740">MMVHAHPDDESIVTGATLAKYAAEGAGVTLVTCTLGEEGEVIPDDLAHLTSDREGTLGEHRIGELDKACLALGVRDHRFLGGPGRYRDSGMMGAPTNEHPRAFWGADVEEAATLLAQVIREVRPHVLVSYDEHGGYGHPDHIQAHRVARRAFLRAGERAMPGTPWQVRKLYAIAQPVSRIEESIARLREESGSFTPPARVSDIARGTPETAVTTRVDATDHWAAKALAMRAHATQITVEGERFALSNDIAQEIDAVEYFTLLVGPTPRIQHGEYETDLFAGL</sequence>
<evidence type="ECO:0000255" key="1">
    <source>
        <dbReference type="HAMAP-Rule" id="MF_01696"/>
    </source>
</evidence>
<feature type="chain" id="PRO_0000400213" description="1D-myo-inositol 2-acetamido-2-deoxy-alpha-D-glucopyranoside deacetylase">
    <location>
        <begin position="1"/>
        <end position="282"/>
    </location>
</feature>
<feature type="binding site" evidence="1">
    <location>
        <position position="6"/>
    </location>
    <ligand>
        <name>Zn(2+)</name>
        <dbReference type="ChEBI" id="CHEBI:29105"/>
    </ligand>
</feature>
<feature type="binding site" evidence="1">
    <location>
        <position position="9"/>
    </location>
    <ligand>
        <name>Zn(2+)</name>
        <dbReference type="ChEBI" id="CHEBI:29105"/>
    </ligand>
</feature>
<feature type="binding site" evidence="1">
    <location>
        <position position="141"/>
    </location>
    <ligand>
        <name>Zn(2+)</name>
        <dbReference type="ChEBI" id="CHEBI:29105"/>
    </ligand>
</feature>
<protein>
    <recommendedName>
        <fullName evidence="1">1D-myo-inositol 2-acetamido-2-deoxy-alpha-D-glucopyranoside deacetylase</fullName>
        <shortName evidence="1">GlcNAc-Ins deacetylase</shortName>
        <ecNumber evidence="1">3.5.1.103</ecNumber>
    </recommendedName>
    <alternativeName>
        <fullName>N-acetyl-1-D-myo-inositol 2-amino-2-deoxy-alpha-D-glucopyranoside deacetylase</fullName>
    </alternativeName>
</protein>
<name>MSHB_NOCDD</name>